<protein>
    <recommendedName>
        <fullName evidence="2">Aquaporin-11</fullName>
    </recommendedName>
</protein>
<gene>
    <name evidence="2" type="primary">AQP11</name>
</gene>
<evidence type="ECO:0000250" key="1">
    <source>
        <dbReference type="UniProtKB" id="Q8BHH1"/>
    </source>
</evidence>
<evidence type="ECO:0000250" key="2">
    <source>
        <dbReference type="UniProtKB" id="Q8NBQ7"/>
    </source>
</evidence>
<evidence type="ECO:0000250" key="3">
    <source>
        <dbReference type="UniProtKB" id="Q96PS8"/>
    </source>
</evidence>
<evidence type="ECO:0000255" key="4"/>
<evidence type="ECO:0000269" key="5">
    <source>
    </source>
</evidence>
<evidence type="ECO:0000305" key="6"/>
<dbReference type="RefSeq" id="NP_001421624.1">
    <property type="nucleotide sequence ID" value="NM_001434695.1"/>
</dbReference>
<dbReference type="RefSeq" id="XP_070128256.1">
    <property type="nucleotide sequence ID" value="XM_070272155.1"/>
</dbReference>
<dbReference type="SMR" id="F6S3G9"/>
<dbReference type="FunCoup" id="F6S3G9">
    <property type="interactions" value="58"/>
</dbReference>
<dbReference type="STRING" id="9796.ENSECAP00000015158"/>
<dbReference type="PaxDb" id="9796-ENSECAP00000015158"/>
<dbReference type="Ensembl" id="ENSECAT00000116618.1">
    <property type="protein sequence ID" value="ENSECAP00000065124.1"/>
    <property type="gene ID" value="ENSECAG00000017607.3"/>
</dbReference>
<dbReference type="GeneID" id="100063181"/>
<dbReference type="VGNC" id="VGNC:55782">
    <property type="gene designation" value="AQP11"/>
</dbReference>
<dbReference type="GeneTree" id="ENSGT00530000063816"/>
<dbReference type="HOGENOM" id="CLU_074449_0_0_1"/>
<dbReference type="InParanoid" id="F6S3G9"/>
<dbReference type="OMA" id="EHFTVYW"/>
<dbReference type="OrthoDB" id="9894770at2759"/>
<dbReference type="TreeFam" id="TF320251"/>
<dbReference type="Proteomes" id="UP000002281">
    <property type="component" value="Chromosome 7"/>
</dbReference>
<dbReference type="Bgee" id="ENSECAG00000017607">
    <property type="expression patterns" value="Expressed in retina and 22 other cell types or tissues"/>
</dbReference>
<dbReference type="GO" id="GO:0009986">
    <property type="term" value="C:cell surface"/>
    <property type="evidence" value="ECO:0007669"/>
    <property type="project" value="Ensembl"/>
</dbReference>
<dbReference type="GO" id="GO:0005737">
    <property type="term" value="C:cytoplasm"/>
    <property type="evidence" value="ECO:0000318"/>
    <property type="project" value="GO_Central"/>
</dbReference>
<dbReference type="GO" id="GO:0030659">
    <property type="term" value="C:cytoplasmic vesicle membrane"/>
    <property type="evidence" value="ECO:0007669"/>
    <property type="project" value="UniProtKB-SubCell"/>
</dbReference>
<dbReference type="GO" id="GO:0005783">
    <property type="term" value="C:endoplasmic reticulum"/>
    <property type="evidence" value="ECO:0000250"/>
    <property type="project" value="UniProtKB"/>
</dbReference>
<dbReference type="GO" id="GO:0005789">
    <property type="term" value="C:endoplasmic reticulum membrane"/>
    <property type="evidence" value="ECO:0007669"/>
    <property type="project" value="UniProtKB-SubCell"/>
</dbReference>
<dbReference type="GO" id="GO:0005886">
    <property type="term" value="C:plasma membrane"/>
    <property type="evidence" value="ECO:0000314"/>
    <property type="project" value="UniProtKB"/>
</dbReference>
<dbReference type="GO" id="GO:0015267">
    <property type="term" value="F:channel activity"/>
    <property type="evidence" value="ECO:0000318"/>
    <property type="project" value="GO_Central"/>
</dbReference>
<dbReference type="GO" id="GO:0015254">
    <property type="term" value="F:glycerol channel activity"/>
    <property type="evidence" value="ECO:0007669"/>
    <property type="project" value="Ensembl"/>
</dbReference>
<dbReference type="GO" id="GO:0140070">
    <property type="term" value="F:hydrogen peroxide channel activity"/>
    <property type="evidence" value="ECO:0007669"/>
    <property type="project" value="Ensembl"/>
</dbReference>
<dbReference type="GO" id="GO:0015250">
    <property type="term" value="F:water channel activity"/>
    <property type="evidence" value="ECO:0000314"/>
    <property type="project" value="UniProtKB"/>
</dbReference>
<dbReference type="GO" id="GO:0048388">
    <property type="term" value="P:endosomal lumen acidification"/>
    <property type="evidence" value="ECO:0007669"/>
    <property type="project" value="Ensembl"/>
</dbReference>
<dbReference type="GO" id="GO:0080170">
    <property type="term" value="P:hydrogen peroxide transmembrane transport"/>
    <property type="evidence" value="ECO:0000250"/>
    <property type="project" value="UniProtKB"/>
</dbReference>
<dbReference type="GO" id="GO:0032364">
    <property type="term" value="P:intracellular oxygen homeostasis"/>
    <property type="evidence" value="ECO:0007669"/>
    <property type="project" value="Ensembl"/>
</dbReference>
<dbReference type="GO" id="GO:0009992">
    <property type="term" value="P:intracellular water homeostasis"/>
    <property type="evidence" value="ECO:0000315"/>
    <property type="project" value="UniProtKB"/>
</dbReference>
<dbReference type="GO" id="GO:0050680">
    <property type="term" value="P:negative regulation of epithelial cell proliferation"/>
    <property type="evidence" value="ECO:0000250"/>
    <property type="project" value="UniProtKB"/>
</dbReference>
<dbReference type="GO" id="GO:1904293">
    <property type="term" value="P:negative regulation of ERAD pathway"/>
    <property type="evidence" value="ECO:0007669"/>
    <property type="project" value="Ensembl"/>
</dbReference>
<dbReference type="GO" id="GO:0008284">
    <property type="term" value="P:positive regulation of cell population proliferation"/>
    <property type="evidence" value="ECO:0000250"/>
    <property type="project" value="UniProtKB"/>
</dbReference>
<dbReference type="GO" id="GO:0006486">
    <property type="term" value="P:protein glycosylation"/>
    <property type="evidence" value="ECO:0007669"/>
    <property type="project" value="Ensembl"/>
</dbReference>
<dbReference type="GO" id="GO:0051260">
    <property type="term" value="P:protein homooligomerization"/>
    <property type="evidence" value="ECO:0007669"/>
    <property type="project" value="Ensembl"/>
</dbReference>
<dbReference type="GO" id="GO:0006612">
    <property type="term" value="P:protein targeting to membrane"/>
    <property type="evidence" value="ECO:0007669"/>
    <property type="project" value="Ensembl"/>
</dbReference>
<dbReference type="GO" id="GO:0072014">
    <property type="term" value="P:proximal tubule development"/>
    <property type="evidence" value="ECO:0000250"/>
    <property type="project" value="UniProtKB"/>
</dbReference>
<dbReference type="FunFam" id="1.20.1080.10:FF:000016">
    <property type="entry name" value="Aquaporin"/>
    <property type="match status" value="1"/>
</dbReference>
<dbReference type="Gene3D" id="1.20.1080.10">
    <property type="entry name" value="Glycerol uptake facilitator protein"/>
    <property type="match status" value="1"/>
</dbReference>
<dbReference type="InterPro" id="IPR051883">
    <property type="entry name" value="AQP11/12_channel"/>
</dbReference>
<dbReference type="InterPro" id="IPR023271">
    <property type="entry name" value="Aquaporin-like"/>
</dbReference>
<dbReference type="InterPro" id="IPR023266">
    <property type="entry name" value="Aquaporin_11"/>
</dbReference>
<dbReference type="InterPro" id="IPR016697">
    <property type="entry name" value="Aquaporin_11/12"/>
</dbReference>
<dbReference type="InterPro" id="IPR000425">
    <property type="entry name" value="MIP"/>
</dbReference>
<dbReference type="PANTHER" id="PTHR21191">
    <property type="entry name" value="AQUAPORIN"/>
    <property type="match status" value="1"/>
</dbReference>
<dbReference type="PANTHER" id="PTHR21191:SF7">
    <property type="entry name" value="AQUAPORIN-11"/>
    <property type="match status" value="1"/>
</dbReference>
<dbReference type="Pfam" id="PF00230">
    <property type="entry name" value="MIP"/>
    <property type="match status" value="1"/>
</dbReference>
<dbReference type="PIRSF" id="PIRSF017529">
    <property type="entry name" value="Aquaporin_11/12"/>
    <property type="match status" value="1"/>
</dbReference>
<dbReference type="PRINTS" id="PR02024">
    <property type="entry name" value="AQUAPORIN11"/>
</dbReference>
<dbReference type="PRINTS" id="PR00783">
    <property type="entry name" value="MINTRINSICP"/>
</dbReference>
<dbReference type="SUPFAM" id="SSF81338">
    <property type="entry name" value="Aquaporin-like"/>
    <property type="match status" value="1"/>
</dbReference>
<accession>F6S3G9</accession>
<name>AQP11_HORSE</name>
<organism>
    <name type="scientific">Equus caballus</name>
    <name type="common">Horse</name>
    <dbReference type="NCBI Taxonomy" id="9796"/>
    <lineage>
        <taxon>Eukaryota</taxon>
        <taxon>Metazoa</taxon>
        <taxon>Chordata</taxon>
        <taxon>Craniata</taxon>
        <taxon>Vertebrata</taxon>
        <taxon>Euteleostomi</taxon>
        <taxon>Mammalia</taxon>
        <taxon>Eutheria</taxon>
        <taxon>Laurasiatheria</taxon>
        <taxon>Perissodactyla</taxon>
        <taxon>Equidae</taxon>
        <taxon>Equus</taxon>
    </lineage>
</organism>
<proteinExistence type="evidence at transcript level"/>
<feature type="chain" id="PRO_0000448835" description="Aquaporin-11">
    <location>
        <begin position="1"/>
        <end position="272"/>
    </location>
</feature>
<feature type="topological domain" description="Cytoplasmic" evidence="2">
    <location>
        <begin position="1"/>
        <end position="14"/>
    </location>
</feature>
<feature type="transmembrane region" description="Helical" evidence="4">
    <location>
        <begin position="15"/>
        <end position="35"/>
    </location>
</feature>
<feature type="topological domain" description="Lumenal" evidence="2">
    <location>
        <begin position="36"/>
        <end position="47"/>
    </location>
</feature>
<feature type="transmembrane region" description="Helical" evidence="4">
    <location>
        <begin position="48"/>
        <end position="68"/>
    </location>
</feature>
<feature type="topological domain" description="Cytoplasmic" evidence="2">
    <location>
        <begin position="69"/>
        <end position="75"/>
    </location>
</feature>
<feature type="transmembrane region" description="Helical" evidence="4">
    <location>
        <begin position="76"/>
        <end position="96"/>
    </location>
</feature>
<feature type="topological domain" description="Lumenal" evidence="2">
    <location>
        <begin position="97"/>
        <end position="167"/>
    </location>
</feature>
<feature type="transmembrane region" description="Helical" evidence="4">
    <location>
        <begin position="168"/>
        <end position="188"/>
    </location>
</feature>
<feature type="topological domain" description="Cytoplasmic" evidence="2">
    <location>
        <begin position="189"/>
        <end position="195"/>
    </location>
</feature>
<feature type="transmembrane region" description="Helical" evidence="4">
    <location>
        <begin position="196"/>
        <end position="216"/>
    </location>
</feature>
<feature type="topological domain" description="Lumenal" evidence="2">
    <location>
        <begin position="217"/>
        <end position="235"/>
    </location>
</feature>
<feature type="transmembrane region" description="Helical" evidence="4">
    <location>
        <begin position="236"/>
        <end position="256"/>
    </location>
</feature>
<feature type="topological domain" description="Cytoplasmic" evidence="2">
    <location>
        <begin position="257"/>
        <end position="272"/>
    </location>
</feature>
<feature type="short sequence motif" description="NPC" evidence="3">
    <location>
        <begin position="100"/>
        <end position="102"/>
    </location>
</feature>
<feature type="short sequence motif" description="NPA" evidence="3">
    <location>
        <begin position="217"/>
        <end position="219"/>
    </location>
</feature>
<comment type="function">
    <text evidence="1 2">Channel protein that facilitates the transport of water, glycerol and hydrogen peroxide across membrane of cell or organelles guaranteeing intracellular homeostasis in several organes like liver, kidney and brain. In situation of stress, participates in endoplasmic reticulum (ER) homeostasis by regulating redox homeostasis through the transport of hydrogen peroxide across the endoplasmic reticulum membrane thereby regulating the oxidative stress through the NADPH oxidase 2 pathway (By similarity). Plays a role by maintaining an environment suitable for translation or protein foldings in the ER lumen namely by participating in the PKD1 glycosylation processing resulting in regulation of PKD1 membrane trafficking thereby preventing the accumulation of unfolding protein in ER. Plays a role in the proximal tubule function by regulating its endosomal acidification. May play a role in postnatal kidney development (By similarity).</text>
</comment>
<comment type="catalytic activity">
    <reaction evidence="5">
        <text>H2O(in) = H2O(out)</text>
        <dbReference type="Rhea" id="RHEA:29667"/>
        <dbReference type="ChEBI" id="CHEBI:15377"/>
    </reaction>
</comment>
<comment type="catalytic activity">
    <reaction evidence="2">
        <text>glycerol(in) = glycerol(out)</text>
        <dbReference type="Rhea" id="RHEA:29675"/>
        <dbReference type="ChEBI" id="CHEBI:17754"/>
    </reaction>
</comment>
<comment type="catalytic activity">
    <reaction evidence="2">
        <text>H2O2(out) = H2O2(in)</text>
        <dbReference type="Rhea" id="RHEA:74375"/>
        <dbReference type="ChEBI" id="CHEBI:16240"/>
    </reaction>
</comment>
<comment type="subunit">
    <text evidence="1 2">Homodimer; disulfide-linked (By similarity). Homotetramer (By similarity). Can also form homomultimer (By similarity).</text>
</comment>
<comment type="subcellular location">
    <subcellularLocation>
        <location evidence="2">Endoplasmic reticulum membrane</location>
        <topology evidence="2">Multi-pass membrane protein</topology>
    </subcellularLocation>
    <subcellularLocation>
        <location evidence="2">Cytoplasmic vesicle membrane</location>
        <topology evidence="2">Multi-pass membrane protein</topology>
    </subcellularLocation>
    <subcellularLocation>
        <location evidence="5">Cell membrane</location>
        <topology evidence="2">Multi-pass membrane protein</topology>
    </subcellularLocation>
    <text evidence="2">Localizes mainly to the periphery of lipid droplets. Localizes to cytoplasmic vesicles in maturing spermatozoa. It accumulates partly in mitochondrial-associated endoplasmic reticulum membranes.</text>
</comment>
<comment type="tissue specificity">
    <text evidence="5">Expressed in retina specifically at retinal Mueller glial cells.</text>
</comment>
<comment type="domain">
    <text evidence="1">The NPC motif is essential for oligomerization and water permeability function.</text>
</comment>
<comment type="PTM">
    <text evidence="2">Not glycosylated.</text>
</comment>
<comment type="similarity">
    <text evidence="6">Belongs to the MIP/aquaporin (TC 1.A.8) family. AQP11/AQP12 subfamily.</text>
</comment>
<reference key="1">
    <citation type="journal article" date="2009" name="Science">
        <title>Genome sequence, comparative analysis, and population genetics of the domestic horse.</title>
        <authorList>
            <person name="Wade C.M."/>
            <person name="Giulotto E."/>
            <person name="Sigurdsson S."/>
            <person name="Zoli M."/>
            <person name="Gnerre S."/>
            <person name="Imsland F."/>
            <person name="Lear T.L."/>
            <person name="Adelson D.L."/>
            <person name="Bailey E."/>
            <person name="Bellone R.R."/>
            <person name="Bloecker H."/>
            <person name="Distl O."/>
            <person name="Edgar R.C."/>
            <person name="Garber M."/>
            <person name="Leeb T."/>
            <person name="Mauceli E."/>
            <person name="MacLeod J.N."/>
            <person name="Penedo M.C.T."/>
            <person name="Raison J.M."/>
            <person name="Sharpe T."/>
            <person name="Vogel J."/>
            <person name="Andersson L."/>
            <person name="Antczak D.F."/>
            <person name="Biagi T."/>
            <person name="Binns M.M."/>
            <person name="Chowdhary B.P."/>
            <person name="Coleman S.J."/>
            <person name="Della Valle G."/>
            <person name="Fryc S."/>
            <person name="Guerin G."/>
            <person name="Hasegawa T."/>
            <person name="Hill E.W."/>
            <person name="Jurka J."/>
            <person name="Kiialainen A."/>
            <person name="Lindgren G."/>
            <person name="Liu J."/>
            <person name="Magnani E."/>
            <person name="Mickelson J.R."/>
            <person name="Murray J."/>
            <person name="Nergadze S.G."/>
            <person name="Onofrio R."/>
            <person name="Pedroni S."/>
            <person name="Piras M.F."/>
            <person name="Raudsepp T."/>
            <person name="Rocchi M."/>
            <person name="Roeed K.H."/>
            <person name="Ryder O.A."/>
            <person name="Searle S."/>
            <person name="Skow L."/>
            <person name="Swinburne J.E."/>
            <person name="Syvaenen A.C."/>
            <person name="Tozaki T."/>
            <person name="Valberg S.J."/>
            <person name="Vaudin M."/>
            <person name="White J.R."/>
            <person name="Zody M.C."/>
            <person name="Lander E.S."/>
            <person name="Lindblad-Toh K."/>
        </authorList>
    </citation>
    <scope>NUCLEOTIDE SEQUENCE [LARGE SCALE GENOMIC DNA]</scope>
    <source>
        <strain>Thoroughbred</strain>
    </source>
</reference>
<reference key="2">
    <citation type="journal article" date="2016" name="J. Neuroinflamm.">
        <title>Aquaporin 11, a regulator of water efflux at retinal Mueller glial cell surface decreases concomitant with immune-mediated gliosis.</title>
        <authorList>
            <person name="Deeg C.A."/>
            <person name="Amann B."/>
            <person name="Lutz K."/>
            <person name="Hirmer S."/>
            <person name="Lutterberg K."/>
            <person name="Kremmer E."/>
            <person name="Hauck S.M."/>
        </authorList>
    </citation>
    <scope>TRANSPORTER ACTIVITY</scope>
    <scope>TISSUE SPECIFICITY</scope>
    <scope>SUBCELLULAR LOCATION</scope>
</reference>
<keyword id="KW-1003">Cell membrane</keyword>
<keyword id="KW-0968">Cytoplasmic vesicle</keyword>
<keyword id="KW-1015">Disulfide bond</keyword>
<keyword id="KW-0256">Endoplasmic reticulum</keyword>
<keyword id="KW-0472">Membrane</keyword>
<keyword id="KW-1185">Reference proteome</keyword>
<keyword id="KW-0812">Transmembrane</keyword>
<keyword id="KW-1133">Transmembrane helix</keyword>
<keyword id="KW-0813">Transport</keyword>
<sequence length="272" mass="30293">MTALRALWSEMQDTCTSLGLMLSVVLLAGLARVVARQQQLHRPMAHAFVLEFLATLQLCCCTHELLLLSEQEPAHPTWPLTLIYFFTLVHGLTLVGTSSNPCGVMMQMMLGGMSPEMGAVRLLAQLIGALGSRYCIGALWSLGLTKYHVSERSFACKNPIQVDLPKAVIVEALCSFIFHSALLNFQEVRPKLRIHLLAALITFLVYAGGSLTGAVFNPALALSLHFKCFDEAFLQFFIVYWLAPSLGILLMILMFSFFLPWLYNNHTINKKE</sequence>